<reference key="1">
    <citation type="journal article" date="1991" name="Agric. Biol. Chem.">
        <title>Cloning and expression of cDNA coding for the major house dust mite allergen Der f II in Escherichia coli.</title>
        <authorList>
            <person name="Yuuki T."/>
            <person name="Okumura Y."/>
            <person name="Ando T."/>
            <person name="Yamakawa H."/>
            <person name="Suko M."/>
            <person name="Haida M."/>
            <person name="Okudaira H."/>
        </authorList>
    </citation>
    <scope>NUCLEOTIDE SEQUENCE [MRNA]</scope>
    <scope>PARTIAL PROTEIN SEQUENCE</scope>
</reference>
<reference key="2">
    <citation type="journal article" date="1994" name="Arerugi">
        <title>Molecular biology of mite antigens.</title>
        <authorList>
            <person name="Okuhira H."/>
        </authorList>
    </citation>
    <scope>NUCLEOTIDE SEQUENCE [MRNA] OF 4-146</scope>
</reference>
<reference key="3">
    <citation type="journal article" date="1993" name="Int. Arch. Allergy Immunol.">
        <title>Determination of three disulfide bonds in a major house dust mite allergen, Der f II.</title>
        <authorList>
            <person name="Nishiyama C."/>
            <person name="Yuuki T."/>
            <person name="Takai T."/>
            <person name="Okumura Y."/>
            <person name="Okudaira H."/>
        </authorList>
    </citation>
    <scope>DISULFIDE BONDS</scope>
    <scope>PARTIAL PROTEIN SEQUENCE</scope>
</reference>
<reference key="4">
    <citation type="journal article" date="1989" name="J. Allergy Clin. Immunol.">
        <title>Antigenic and structural analysis of group II allergens (Der f II and Der p II) from house dust mites (Dermatophagoides spp).</title>
        <authorList>
            <person name="Heymann P.W."/>
            <person name="Chapman M.D."/>
            <person name="Aalberse R.C."/>
            <person name="Fox J.W."/>
            <person name="Platts-Mills T.A.E."/>
        </authorList>
    </citation>
    <scope>PROTEIN SEQUENCE OF 18-52</scope>
</reference>
<reference key="5">
    <citation type="journal article" date="1998" name="J. Biol. Chem.">
        <title>Solution structure of Der f 2, the major mite allergen for atopic diseases.</title>
        <authorList>
            <person name="Ichikawa S."/>
            <person name="Hatanaka H."/>
            <person name="Yuuki T."/>
            <person name="Iwamoto N."/>
            <person name="Kojima S."/>
            <person name="Nishiyama C."/>
            <person name="Ogura K."/>
            <person name="Okumura Y."/>
            <person name="Inagaki F."/>
        </authorList>
    </citation>
    <scope>STRUCTURE BY NMR</scope>
</reference>
<comment type="subcellular location">
    <subcellularLocation>
        <location>Secreted</location>
    </subcellularLocation>
</comment>
<comment type="allergen">
    <text>Causes an allergic reaction in human. Common symptoms of mite allergy are bronchial asthma, allergic rhinitis and conjunctivitis.</text>
</comment>
<comment type="miscellaneous">
    <text>The sequence shown here is from clone 2. The N-terminal sequence (AA 1-8) from clone 1 and 11 are not yet known.</text>
</comment>
<comment type="similarity">
    <text evidence="3">Belongs to the NPC2 family.</text>
</comment>
<proteinExistence type="evidence at protein level"/>
<protein>
    <recommendedName>
        <fullName>Mite group 2 allergen Der f 2</fullName>
    </recommendedName>
    <alternativeName>
        <fullName>Allergen Der f II</fullName>
    </alternativeName>
    <allergenName>Der f 2</allergenName>
</protein>
<feature type="signal peptide" evidence="1">
    <location>
        <begin position="1"/>
        <end position="17"/>
    </location>
</feature>
<feature type="chain" id="PRO_0000019860" description="Mite group 2 allergen Der f 2">
    <location>
        <begin position="18"/>
        <end position="146"/>
    </location>
</feature>
<feature type="disulfide bond" evidence="2">
    <location>
        <begin position="25"/>
        <end position="136"/>
    </location>
</feature>
<feature type="disulfide bond" evidence="2">
    <location>
        <begin position="38"/>
        <end position="44"/>
    </location>
</feature>
<feature type="disulfide bond" evidence="2">
    <location>
        <begin position="90"/>
        <end position="95"/>
    </location>
</feature>
<feature type="sequence variant" description="In clone 1.">
    <original>M</original>
    <variation>V</variation>
    <location>
        <position position="93"/>
    </location>
</feature>
<feature type="sequence variant" description="In clone 11.">
    <original>I</original>
    <variation>A</variation>
    <location>
        <position position="105"/>
    </location>
</feature>
<feature type="sequence variant" description="In clone 11.">
    <original>I</original>
    <variation>V</variation>
    <location>
        <position position="128"/>
    </location>
</feature>
<feature type="sequence variant" description="In clone 11.">
    <original>G</original>
    <variation>A</variation>
    <location>
        <position position="142"/>
    </location>
</feature>
<feature type="sequence conflict" description="In Ref. 2; AAB30829." evidence="3" ref="2">
    <original>ILCL</original>
    <variation>GTMV</variation>
    <location>
        <begin position="5"/>
        <end position="8"/>
    </location>
</feature>
<feature type="strand" evidence="7">
    <location>
        <begin position="23"/>
        <end position="28"/>
    </location>
</feature>
<feature type="strand" evidence="7">
    <location>
        <begin position="30"/>
        <end position="35"/>
    </location>
</feature>
<feature type="strand" evidence="4">
    <location>
        <begin position="36"/>
        <end position="38"/>
    </location>
</feature>
<feature type="strand" evidence="5">
    <location>
        <begin position="40"/>
        <end position="43"/>
    </location>
</feature>
<feature type="strand" evidence="7">
    <location>
        <begin position="44"/>
        <end position="47"/>
    </location>
</feature>
<feature type="strand" evidence="7">
    <location>
        <begin position="50"/>
        <end position="59"/>
    </location>
</feature>
<feature type="strand" evidence="7">
    <location>
        <begin position="68"/>
        <end position="75"/>
    </location>
</feature>
<feature type="strand" evidence="7">
    <location>
        <begin position="78"/>
        <end position="80"/>
    </location>
</feature>
<feature type="strand" evidence="8">
    <location>
        <begin position="83"/>
        <end position="85"/>
    </location>
</feature>
<feature type="helix" evidence="7">
    <location>
        <begin position="89"/>
        <end position="91"/>
    </location>
</feature>
<feature type="turn" evidence="6">
    <location>
        <begin position="92"/>
        <end position="94"/>
    </location>
</feature>
<feature type="strand" evidence="7">
    <location>
        <begin position="95"/>
        <end position="97"/>
    </location>
</feature>
<feature type="strand" evidence="7">
    <location>
        <begin position="102"/>
        <end position="110"/>
    </location>
</feature>
<feature type="strand" evidence="7">
    <location>
        <begin position="121"/>
        <end position="129"/>
    </location>
</feature>
<feature type="strand" evidence="7">
    <location>
        <begin position="132"/>
        <end position="139"/>
    </location>
</feature>
<feature type="strand" evidence="7">
    <location>
        <begin position="142"/>
        <end position="145"/>
    </location>
</feature>
<gene>
    <name type="primary">DERF2</name>
</gene>
<organism>
    <name type="scientific">Dermatophagoides farinae</name>
    <name type="common">American house dust mite</name>
    <dbReference type="NCBI Taxonomy" id="6954"/>
    <lineage>
        <taxon>Eukaryota</taxon>
        <taxon>Metazoa</taxon>
        <taxon>Ecdysozoa</taxon>
        <taxon>Arthropoda</taxon>
        <taxon>Chelicerata</taxon>
        <taxon>Arachnida</taxon>
        <taxon>Acari</taxon>
        <taxon>Acariformes</taxon>
        <taxon>Sarcoptiformes</taxon>
        <taxon>Astigmata</taxon>
        <taxon>Psoroptidia</taxon>
        <taxon>Analgoidea</taxon>
        <taxon>Pyroglyphidae</taxon>
        <taxon>Dermatophagoidinae</taxon>
        <taxon>Dermatophagoides</taxon>
    </lineage>
</organism>
<accession>Q00855</accession>
<accession>P39672</accession>
<accession>Q26359</accession>
<dbReference type="EMBL" id="D10447">
    <property type="protein sequence ID" value="BAA01239.1"/>
    <property type="molecule type" value="mRNA"/>
</dbReference>
<dbReference type="EMBL" id="D10448">
    <property type="protein sequence ID" value="BAA01240.1"/>
    <property type="molecule type" value="mRNA"/>
</dbReference>
<dbReference type="EMBL" id="D10449">
    <property type="protein sequence ID" value="BAA01241.1"/>
    <property type="molecule type" value="mRNA"/>
</dbReference>
<dbReference type="EMBL" id="S70378">
    <property type="protein sequence ID" value="AAB30829.1"/>
    <property type="molecule type" value="mRNA"/>
</dbReference>
<dbReference type="PIR" id="JU0394">
    <property type="entry name" value="JU0394"/>
</dbReference>
<dbReference type="PDB" id="1AHK">
    <property type="method" value="NMR"/>
    <property type="chains" value="A=18-146"/>
</dbReference>
<dbReference type="PDB" id="1AHM">
    <property type="method" value="NMR"/>
    <property type="chains" value="A=18-146"/>
</dbReference>
<dbReference type="PDB" id="1WRF">
    <property type="method" value="NMR"/>
    <property type="chains" value="A=18-146"/>
</dbReference>
<dbReference type="PDB" id="1XWV">
    <property type="method" value="X-ray"/>
    <property type="resolution" value="1.83 A"/>
    <property type="chains" value="A/B=18-146"/>
</dbReference>
<dbReference type="PDB" id="2F08">
    <property type="method" value="X-ray"/>
    <property type="resolution" value="2.20 A"/>
    <property type="chains" value="A/B/C/D=18-146"/>
</dbReference>
<dbReference type="PDBsum" id="1AHK"/>
<dbReference type="PDBsum" id="1AHM"/>
<dbReference type="PDBsum" id="1WRF"/>
<dbReference type="PDBsum" id="1XWV"/>
<dbReference type="PDBsum" id="2F08"/>
<dbReference type="SMR" id="Q00855"/>
<dbReference type="Allergome" id="1108">
    <property type="allergen name" value="Der f 2.0103"/>
</dbReference>
<dbReference type="Allergome" id="1294">
    <property type="allergen name" value="Der f 2.0101"/>
</dbReference>
<dbReference type="Allergome" id="1295">
    <property type="allergen name" value="Der f 2.0102"/>
</dbReference>
<dbReference type="Allergome" id="302">
    <property type="allergen name" value="Der f 2"/>
</dbReference>
<dbReference type="OrthoDB" id="6490559at2759"/>
<dbReference type="EvolutionaryTrace" id="Q00855"/>
<dbReference type="GO" id="GO:0005576">
    <property type="term" value="C:extracellular region"/>
    <property type="evidence" value="ECO:0007669"/>
    <property type="project" value="UniProtKB-SubCell"/>
</dbReference>
<dbReference type="GO" id="GO:0032934">
    <property type="term" value="F:sterol binding"/>
    <property type="evidence" value="ECO:0007669"/>
    <property type="project" value="InterPro"/>
</dbReference>
<dbReference type="GO" id="GO:0015918">
    <property type="term" value="P:sterol transport"/>
    <property type="evidence" value="ECO:0007669"/>
    <property type="project" value="InterPro"/>
</dbReference>
<dbReference type="CDD" id="cd00918">
    <property type="entry name" value="Der-p2_like"/>
    <property type="match status" value="1"/>
</dbReference>
<dbReference type="FunFam" id="2.60.40.770:FF:000001">
    <property type="entry name" value="NPC intracellular cholesterol transporter 2"/>
    <property type="match status" value="1"/>
</dbReference>
<dbReference type="Gene3D" id="2.60.40.770">
    <property type="match status" value="1"/>
</dbReference>
<dbReference type="InterPro" id="IPR014756">
    <property type="entry name" value="Ig_E-set"/>
</dbReference>
<dbReference type="InterPro" id="IPR003172">
    <property type="entry name" value="ML_dom"/>
</dbReference>
<dbReference type="InterPro" id="IPR039670">
    <property type="entry name" value="NPC2-like"/>
</dbReference>
<dbReference type="PANTHER" id="PTHR11306">
    <property type="entry name" value="NIEMANN PICK TYPE C2 PROTEIN NPC2-RELATED"/>
    <property type="match status" value="1"/>
</dbReference>
<dbReference type="PANTHER" id="PTHR11306:SF68">
    <property type="entry name" value="NPC INTRACELLULAR CHOLESTEROL TRANSPORTER 2"/>
    <property type="match status" value="1"/>
</dbReference>
<dbReference type="Pfam" id="PF02221">
    <property type="entry name" value="E1_DerP2_DerF2"/>
    <property type="match status" value="1"/>
</dbReference>
<dbReference type="SMART" id="SM00737">
    <property type="entry name" value="ML"/>
    <property type="match status" value="1"/>
</dbReference>
<dbReference type="SUPFAM" id="SSF81296">
    <property type="entry name" value="E set domains"/>
    <property type="match status" value="1"/>
</dbReference>
<keyword id="KW-0002">3D-structure</keyword>
<keyword id="KW-0020">Allergen</keyword>
<keyword id="KW-0903">Direct protein sequencing</keyword>
<keyword id="KW-1015">Disulfide bond</keyword>
<keyword id="KW-0964">Secreted</keyword>
<keyword id="KW-0732">Signal</keyword>
<evidence type="ECO:0000269" key="1">
    <source>
    </source>
</evidence>
<evidence type="ECO:0000269" key="2">
    <source>
    </source>
</evidence>
<evidence type="ECO:0000305" key="3"/>
<evidence type="ECO:0007829" key="4">
    <source>
        <dbReference type="PDB" id="1AHK"/>
    </source>
</evidence>
<evidence type="ECO:0007829" key="5">
    <source>
        <dbReference type="PDB" id="1AHM"/>
    </source>
</evidence>
<evidence type="ECO:0007829" key="6">
    <source>
        <dbReference type="PDB" id="1WRF"/>
    </source>
</evidence>
<evidence type="ECO:0007829" key="7">
    <source>
        <dbReference type="PDB" id="1XWV"/>
    </source>
</evidence>
<evidence type="ECO:0007829" key="8">
    <source>
        <dbReference type="PDB" id="2F08"/>
    </source>
</evidence>
<name>ALL2_DERFA</name>
<sequence length="146" mass="15802">MISKILCLSLLVAAVVADQVDVKDCANNEIKKVMVDGCHGSDPCIIHRGKPFTLEALFDANQNTKTAKIEIKASLDGLEIDVPGIDTNACHFMKCPLVKGQQYDIKYTWNVPKIAPKSENVVVTVKLIGDNGVLACAIATHGKIRD</sequence>